<name>ATPA1_PSEA6</name>
<sequence length="528" mass="57483">MTPSVDNNLKQGYQYLFEHLEQSRQRAQPNLVLQEIGSVKSVSAGIAIVHGLPSAGFEELLRFPGDIYGIAFNIDEHDIGVIMLGDYSQLNAGDEVKRTGRVVDIPVGADLIGRVIDPLGRTLDGKGNLTSTQRMAIERPAPEIMTRSPVTEPLQTGLKVLDALIPIGKGQRELIMGDRQTGKTSIAIDAILNQKDKNVLCVYCAIGQKSASVAKILATLKHHNAFEYTVVMVTEGNDPPGLDYIAPYAATSIGEYFMEQGRDVLIVYDDLTQHARSYRELSLLLRRPPGREAFPGDIFYLHSRLLERSTHLNEAHGGGSMTALPIIETEEQNMSAYIPTNLISITDGQIYLSPDLFSLGILPAVDVGKSVSRVGGKAQRSAFRKVSGALKLAYAQFEELETFARFGARLDANSLQTIEHGQRIRSCLKQAESSPLSVAAQIVILLALTNDLFDAIDLAAMDSAQSAAIDGLTSLPLPIIEKLEQAESIEEQDQHIILDMLSQALKPFAQGTLRSGDKIQPTVNEANG</sequence>
<gene>
    <name evidence="1" type="primary">atpA1</name>
    <name type="ordered locus">Patl_2675</name>
</gene>
<keyword id="KW-0066">ATP synthesis</keyword>
<keyword id="KW-0067">ATP-binding</keyword>
<keyword id="KW-0997">Cell inner membrane</keyword>
<keyword id="KW-1003">Cell membrane</keyword>
<keyword id="KW-0139">CF(1)</keyword>
<keyword id="KW-0375">Hydrogen ion transport</keyword>
<keyword id="KW-0406">Ion transport</keyword>
<keyword id="KW-0472">Membrane</keyword>
<keyword id="KW-0547">Nucleotide-binding</keyword>
<keyword id="KW-1278">Translocase</keyword>
<keyword id="KW-0813">Transport</keyword>
<organism>
    <name type="scientific">Pseudoalteromonas atlantica (strain T6c / ATCC BAA-1087)</name>
    <dbReference type="NCBI Taxonomy" id="3042615"/>
    <lineage>
        <taxon>Bacteria</taxon>
        <taxon>Pseudomonadati</taxon>
        <taxon>Pseudomonadota</taxon>
        <taxon>Gammaproteobacteria</taxon>
        <taxon>Alteromonadales</taxon>
        <taxon>Alteromonadaceae</taxon>
        <taxon>Paraglaciecola</taxon>
    </lineage>
</organism>
<protein>
    <recommendedName>
        <fullName evidence="1">ATP synthase subunit alpha 1</fullName>
        <ecNumber evidence="1">7.1.2.2</ecNumber>
    </recommendedName>
    <alternativeName>
        <fullName evidence="1">ATP synthase F1 sector subunit alpha 1</fullName>
    </alternativeName>
    <alternativeName>
        <fullName evidence="1">F-ATPase subunit alpha 1</fullName>
    </alternativeName>
</protein>
<proteinExistence type="inferred from homology"/>
<feature type="chain" id="PRO_0000339046" description="ATP synthase subunit alpha 1">
    <location>
        <begin position="1"/>
        <end position="528"/>
    </location>
</feature>
<feature type="binding site" evidence="1">
    <location>
        <begin position="177"/>
        <end position="184"/>
    </location>
    <ligand>
        <name>ATP</name>
        <dbReference type="ChEBI" id="CHEBI:30616"/>
    </ligand>
</feature>
<feature type="site" description="Required for activity" evidence="1">
    <location>
        <position position="370"/>
    </location>
</feature>
<dbReference type="EC" id="7.1.2.2" evidence="1"/>
<dbReference type="EMBL" id="CP000388">
    <property type="protein sequence ID" value="ABG41187.1"/>
    <property type="molecule type" value="Genomic_DNA"/>
</dbReference>
<dbReference type="RefSeq" id="WP_011575448.1">
    <property type="nucleotide sequence ID" value="NC_008228.1"/>
</dbReference>
<dbReference type="SMR" id="Q15SF1"/>
<dbReference type="STRING" id="342610.Patl_2675"/>
<dbReference type="KEGG" id="pat:Patl_2675"/>
<dbReference type="eggNOG" id="COG0056">
    <property type="taxonomic scope" value="Bacteria"/>
</dbReference>
<dbReference type="HOGENOM" id="CLU_010091_2_1_6"/>
<dbReference type="OrthoDB" id="9803053at2"/>
<dbReference type="Proteomes" id="UP000001981">
    <property type="component" value="Chromosome"/>
</dbReference>
<dbReference type="GO" id="GO:0005886">
    <property type="term" value="C:plasma membrane"/>
    <property type="evidence" value="ECO:0007669"/>
    <property type="project" value="UniProtKB-SubCell"/>
</dbReference>
<dbReference type="GO" id="GO:0045259">
    <property type="term" value="C:proton-transporting ATP synthase complex"/>
    <property type="evidence" value="ECO:0007669"/>
    <property type="project" value="UniProtKB-KW"/>
</dbReference>
<dbReference type="GO" id="GO:0043531">
    <property type="term" value="F:ADP binding"/>
    <property type="evidence" value="ECO:0007669"/>
    <property type="project" value="TreeGrafter"/>
</dbReference>
<dbReference type="GO" id="GO:0005524">
    <property type="term" value="F:ATP binding"/>
    <property type="evidence" value="ECO:0007669"/>
    <property type="project" value="UniProtKB-UniRule"/>
</dbReference>
<dbReference type="GO" id="GO:0046933">
    <property type="term" value="F:proton-transporting ATP synthase activity, rotational mechanism"/>
    <property type="evidence" value="ECO:0007669"/>
    <property type="project" value="UniProtKB-UniRule"/>
</dbReference>
<dbReference type="CDD" id="cd18113">
    <property type="entry name" value="ATP-synt_F1_alpha_C"/>
    <property type="match status" value="1"/>
</dbReference>
<dbReference type="CDD" id="cd18116">
    <property type="entry name" value="ATP-synt_F1_alpha_N"/>
    <property type="match status" value="1"/>
</dbReference>
<dbReference type="CDD" id="cd01132">
    <property type="entry name" value="F1-ATPase_alpha_CD"/>
    <property type="match status" value="1"/>
</dbReference>
<dbReference type="FunFam" id="3.40.50.300:FF:000002">
    <property type="entry name" value="ATP synthase subunit alpha"/>
    <property type="match status" value="1"/>
</dbReference>
<dbReference type="Gene3D" id="2.40.30.20">
    <property type="match status" value="1"/>
</dbReference>
<dbReference type="Gene3D" id="1.20.150.20">
    <property type="entry name" value="ATP synthase alpha/beta chain, C-terminal domain"/>
    <property type="match status" value="1"/>
</dbReference>
<dbReference type="Gene3D" id="3.40.50.300">
    <property type="entry name" value="P-loop containing nucleotide triphosphate hydrolases"/>
    <property type="match status" value="1"/>
</dbReference>
<dbReference type="HAMAP" id="MF_01346">
    <property type="entry name" value="ATP_synth_alpha_bact"/>
    <property type="match status" value="1"/>
</dbReference>
<dbReference type="InterPro" id="IPR017710">
    <property type="entry name" value="Alt_ATP_synth_F1_asu"/>
</dbReference>
<dbReference type="InterPro" id="IPR023366">
    <property type="entry name" value="ATP_synth_asu-like_sf"/>
</dbReference>
<dbReference type="InterPro" id="IPR000793">
    <property type="entry name" value="ATP_synth_asu_C"/>
</dbReference>
<dbReference type="InterPro" id="IPR038376">
    <property type="entry name" value="ATP_synth_asu_C_sf"/>
</dbReference>
<dbReference type="InterPro" id="IPR033732">
    <property type="entry name" value="ATP_synth_F1_a_nt-bd_dom"/>
</dbReference>
<dbReference type="InterPro" id="IPR005294">
    <property type="entry name" value="ATP_synth_F1_asu"/>
</dbReference>
<dbReference type="InterPro" id="IPR020003">
    <property type="entry name" value="ATPase_a/bsu_AS"/>
</dbReference>
<dbReference type="InterPro" id="IPR004100">
    <property type="entry name" value="ATPase_F1/V1/A1_a/bsu_N"/>
</dbReference>
<dbReference type="InterPro" id="IPR036121">
    <property type="entry name" value="ATPase_F1/V1/A1_a/bsu_N_sf"/>
</dbReference>
<dbReference type="InterPro" id="IPR000194">
    <property type="entry name" value="ATPase_F1/V1/A1_a/bsu_nucl-bd"/>
</dbReference>
<dbReference type="InterPro" id="IPR027417">
    <property type="entry name" value="P-loop_NTPase"/>
</dbReference>
<dbReference type="NCBIfam" id="TIGR03324">
    <property type="entry name" value="alt_F1F0_F1_al"/>
    <property type="match status" value="1"/>
</dbReference>
<dbReference type="NCBIfam" id="TIGR00962">
    <property type="entry name" value="atpA"/>
    <property type="match status" value="1"/>
</dbReference>
<dbReference type="NCBIfam" id="NF009884">
    <property type="entry name" value="PRK13343.1"/>
    <property type="match status" value="1"/>
</dbReference>
<dbReference type="PANTHER" id="PTHR48082">
    <property type="entry name" value="ATP SYNTHASE SUBUNIT ALPHA, MITOCHONDRIAL"/>
    <property type="match status" value="1"/>
</dbReference>
<dbReference type="PANTHER" id="PTHR48082:SF2">
    <property type="entry name" value="ATP SYNTHASE SUBUNIT ALPHA, MITOCHONDRIAL"/>
    <property type="match status" value="1"/>
</dbReference>
<dbReference type="Pfam" id="PF00006">
    <property type="entry name" value="ATP-synt_ab"/>
    <property type="match status" value="1"/>
</dbReference>
<dbReference type="Pfam" id="PF00306">
    <property type="entry name" value="ATP-synt_ab_C"/>
    <property type="match status" value="1"/>
</dbReference>
<dbReference type="Pfam" id="PF02874">
    <property type="entry name" value="ATP-synt_ab_N"/>
    <property type="match status" value="1"/>
</dbReference>
<dbReference type="SUPFAM" id="SSF47917">
    <property type="entry name" value="C-terminal domain of alpha and beta subunits of F1 ATP synthase"/>
    <property type="match status" value="1"/>
</dbReference>
<dbReference type="SUPFAM" id="SSF50615">
    <property type="entry name" value="N-terminal domain of alpha and beta subunits of F1 ATP synthase"/>
    <property type="match status" value="1"/>
</dbReference>
<dbReference type="SUPFAM" id="SSF52540">
    <property type="entry name" value="P-loop containing nucleoside triphosphate hydrolases"/>
    <property type="match status" value="1"/>
</dbReference>
<dbReference type="PROSITE" id="PS00152">
    <property type="entry name" value="ATPASE_ALPHA_BETA"/>
    <property type="match status" value="1"/>
</dbReference>
<accession>Q15SF1</accession>
<reference key="1">
    <citation type="submission" date="2006-06" db="EMBL/GenBank/DDBJ databases">
        <title>Complete sequence of Pseudoalteromonas atlantica T6c.</title>
        <authorList>
            <consortium name="US DOE Joint Genome Institute"/>
            <person name="Copeland A."/>
            <person name="Lucas S."/>
            <person name="Lapidus A."/>
            <person name="Barry K."/>
            <person name="Detter J.C."/>
            <person name="Glavina del Rio T."/>
            <person name="Hammon N."/>
            <person name="Israni S."/>
            <person name="Dalin E."/>
            <person name="Tice H."/>
            <person name="Pitluck S."/>
            <person name="Saunders E."/>
            <person name="Brettin T."/>
            <person name="Bruce D."/>
            <person name="Han C."/>
            <person name="Tapia R."/>
            <person name="Gilna P."/>
            <person name="Schmutz J."/>
            <person name="Larimer F."/>
            <person name="Land M."/>
            <person name="Hauser L."/>
            <person name="Kyrpides N."/>
            <person name="Kim E."/>
            <person name="Karls A.C."/>
            <person name="Bartlett D."/>
            <person name="Higgins B.P."/>
            <person name="Richardson P."/>
        </authorList>
    </citation>
    <scope>NUCLEOTIDE SEQUENCE [LARGE SCALE GENOMIC DNA]</scope>
    <source>
        <strain>T6c / ATCC BAA-1087</strain>
    </source>
</reference>
<evidence type="ECO:0000255" key="1">
    <source>
        <dbReference type="HAMAP-Rule" id="MF_01346"/>
    </source>
</evidence>
<comment type="function">
    <text evidence="1">Produces ATP from ADP in the presence of a proton gradient across the membrane. The alpha chain is a regulatory subunit.</text>
</comment>
<comment type="catalytic activity">
    <reaction evidence="1">
        <text>ATP + H2O + 4 H(+)(in) = ADP + phosphate + 5 H(+)(out)</text>
        <dbReference type="Rhea" id="RHEA:57720"/>
        <dbReference type="ChEBI" id="CHEBI:15377"/>
        <dbReference type="ChEBI" id="CHEBI:15378"/>
        <dbReference type="ChEBI" id="CHEBI:30616"/>
        <dbReference type="ChEBI" id="CHEBI:43474"/>
        <dbReference type="ChEBI" id="CHEBI:456216"/>
        <dbReference type="EC" id="7.1.2.2"/>
    </reaction>
</comment>
<comment type="subunit">
    <text evidence="1">F-type ATPases have 2 components, CF(1) - the catalytic core - and CF(0) - the membrane proton channel. CF(1) has five subunits: alpha(3), beta(3), gamma(1), delta(1), epsilon(1). CF(0) has three main subunits: a(1), b(2) and c(9-12). The alpha and beta chains form an alternating ring which encloses part of the gamma chain. CF(1) is attached to CF(0) by a central stalk formed by the gamma and epsilon chains, while a peripheral stalk is formed by the delta and b chains.</text>
</comment>
<comment type="subcellular location">
    <subcellularLocation>
        <location evidence="1">Cell inner membrane</location>
        <topology evidence="1">Peripheral membrane protein</topology>
    </subcellularLocation>
</comment>
<comment type="similarity">
    <text evidence="1">Belongs to the ATPase alpha/beta chains family.</text>
</comment>